<evidence type="ECO:0000250" key="1"/>
<evidence type="ECO:0000250" key="2">
    <source>
        <dbReference type="UniProtKB" id="Q6Q972"/>
    </source>
</evidence>
<evidence type="ECO:0000255" key="3"/>
<evidence type="ECO:0000303" key="4">
    <source>
    </source>
</evidence>
<evidence type="ECO:0000305" key="5"/>
<sequence length="349" mass="38212">MQTYGNSAVTYGWWAGNSGVTNRSGKFIAAHAAHTGLIAFWAGAFTLFELARFDPSVPMGHQPLIALPHLATLGIGFDETGTFVGGSAVVAVAVCHLVGSMAYGAGGLMHSLLFSSDMQESSVPQARKFKLEWDNPDNQTFILGHHLIFFGVACIWFVEWARIHGVYDPSIGAIRQVEYDLNLSHIWDHQFDFLTIDSLEDVMGGHAFLAFLEITGGAFHIATKQVGEYTKFKGAGLLSAEAILSWSLAGIGWMAVVAAFWSATNTTVYPVEWFGEPLALKFGISPYWVDTVDLGSAHTSRAWLANVHYYFGFFFIQGHLWHALRAMGFDFKRVTSALSNLDTASVSLK</sequence>
<accession>Q46LS0</accession>
<keyword id="KW-0148">Chlorophyll</keyword>
<keyword id="KW-0157">Chromophore</keyword>
<keyword id="KW-0472">Membrane</keyword>
<keyword id="KW-0602">Photosynthesis</keyword>
<keyword id="KW-0603">Photosystem I</keyword>
<keyword id="KW-0604">Photosystem II</keyword>
<keyword id="KW-1185">Reference proteome</keyword>
<keyword id="KW-0793">Thylakoid</keyword>
<keyword id="KW-0812">Transmembrane</keyword>
<keyword id="KW-1133">Transmembrane helix</keyword>
<name>PCBA_PROMT</name>
<organism>
    <name type="scientific">Prochlorococcus marinus (strain NATL2A)</name>
    <dbReference type="NCBI Taxonomy" id="59920"/>
    <lineage>
        <taxon>Bacteria</taxon>
        <taxon>Bacillati</taxon>
        <taxon>Cyanobacteriota</taxon>
        <taxon>Cyanophyceae</taxon>
        <taxon>Synechococcales</taxon>
        <taxon>Prochlorococcaceae</taxon>
        <taxon>Prochlorococcus</taxon>
    </lineage>
</organism>
<reference key="1">
    <citation type="journal article" date="2007" name="PLoS Genet.">
        <title>Patterns and implications of gene gain and loss in the evolution of Prochlorococcus.</title>
        <authorList>
            <person name="Kettler G.C."/>
            <person name="Martiny A.C."/>
            <person name="Huang K."/>
            <person name="Zucker J."/>
            <person name="Coleman M.L."/>
            <person name="Rodrigue S."/>
            <person name="Chen F."/>
            <person name="Lapidus A."/>
            <person name="Ferriera S."/>
            <person name="Johnson J."/>
            <person name="Steglich C."/>
            <person name="Church G.M."/>
            <person name="Richardson P."/>
            <person name="Chisholm S.W."/>
        </authorList>
    </citation>
    <scope>NUCLEOTIDE SEQUENCE [LARGE SCALE GENOMIC DNA]</scope>
    <source>
        <strain>NATL2A</strain>
    </source>
</reference>
<protein>
    <recommendedName>
        <fullName>Divinyl chlorophyll a/b light-harvesting protein PcbA</fullName>
    </recommendedName>
</protein>
<feature type="chain" id="PRO_0000077549" description="Divinyl chlorophyll a/b light-harvesting protein PcbA">
    <location>
        <begin position="1"/>
        <end position="349"/>
    </location>
</feature>
<feature type="transmembrane region" description="Helical" evidence="3">
    <location>
        <begin position="27"/>
        <end position="47"/>
    </location>
</feature>
<feature type="transmembrane region" description="Helical" evidence="3">
    <location>
        <begin position="57"/>
        <end position="77"/>
    </location>
</feature>
<feature type="transmembrane region" description="Helical" evidence="3">
    <location>
        <begin position="89"/>
        <end position="109"/>
    </location>
</feature>
<feature type="transmembrane region" description="Helical" evidence="3">
    <location>
        <begin position="202"/>
        <end position="222"/>
    </location>
</feature>
<feature type="transmembrane region" description="Helical" evidence="3">
    <location>
        <begin position="242"/>
        <end position="262"/>
    </location>
</feature>
<feature type="transmembrane region" description="Helical" evidence="3">
    <location>
        <begin position="304"/>
        <end position="324"/>
    </location>
</feature>
<comment type="function">
    <text evidence="2">The antenna complex functions as a light receptor, it captures and delivers excitation energy to photosystems II and I. The Prochlorales pcb genes are not related to higher plant LHCs.</text>
</comment>
<comment type="cofactor">
    <cofactor evidence="2">
        <name>divinyl chlorophyll a</name>
        <dbReference type="ChEBI" id="CHEBI:73095"/>
    </cofactor>
</comment>
<comment type="cofactor">
    <cofactor evidence="2">
        <name>divinyl chlorophyll b</name>
        <dbReference type="ChEBI" id="CHEBI:73096"/>
    </cofactor>
</comment>
<comment type="subunit">
    <text evidence="2">The antenna complex consists of divinyl chlorophylls (a and b) and divinyl chlorophyll a/b binding proteins and binds more divinyl chlorophyll b than does the antenna complex from high-light-adapted Prochlorococcus.</text>
</comment>
<comment type="subcellular location">
    <subcellularLocation>
        <location evidence="2">Cellular thylakoid membrane</location>
        <topology evidence="1">Multi-pass membrane protein</topology>
    </subcellularLocation>
</comment>
<comment type="miscellaneous">
    <text evidence="4">This low-light-adapted strain contains 7 pcb genes.</text>
</comment>
<comment type="similarity">
    <text evidence="5">Belongs to the PsbB/PsbC family. IsiA/Pcb subfamily.</text>
</comment>
<dbReference type="EMBL" id="CP000095">
    <property type="protein sequence ID" value="AAZ57558.1"/>
    <property type="molecule type" value="Genomic_DNA"/>
</dbReference>
<dbReference type="RefSeq" id="WP_011293600.1">
    <property type="nucleotide sequence ID" value="NC_007335.2"/>
</dbReference>
<dbReference type="SMR" id="Q46LS0"/>
<dbReference type="STRING" id="59920.PMN2A_0066"/>
<dbReference type="KEGG" id="pmn:PMN2A_0066"/>
<dbReference type="HOGENOM" id="CLU_028310_0_0_3"/>
<dbReference type="OrthoDB" id="9429529at2"/>
<dbReference type="PhylomeDB" id="Q46LS0"/>
<dbReference type="Proteomes" id="UP000002535">
    <property type="component" value="Chromosome"/>
</dbReference>
<dbReference type="GO" id="GO:0009522">
    <property type="term" value="C:photosystem I"/>
    <property type="evidence" value="ECO:0007669"/>
    <property type="project" value="UniProtKB-KW"/>
</dbReference>
<dbReference type="GO" id="GO:0009523">
    <property type="term" value="C:photosystem II"/>
    <property type="evidence" value="ECO:0007669"/>
    <property type="project" value="UniProtKB-KW"/>
</dbReference>
<dbReference type="GO" id="GO:0031676">
    <property type="term" value="C:plasma membrane-derived thylakoid membrane"/>
    <property type="evidence" value="ECO:0007669"/>
    <property type="project" value="UniProtKB-SubCell"/>
</dbReference>
<dbReference type="GO" id="GO:0016168">
    <property type="term" value="F:chlorophyll binding"/>
    <property type="evidence" value="ECO:0007669"/>
    <property type="project" value="UniProtKB-KW"/>
</dbReference>
<dbReference type="GO" id="GO:0009767">
    <property type="term" value="P:photosynthetic electron transport chain"/>
    <property type="evidence" value="ECO:0007669"/>
    <property type="project" value="InterPro"/>
</dbReference>
<dbReference type="InterPro" id="IPR000932">
    <property type="entry name" value="PS_antenna-like"/>
</dbReference>
<dbReference type="InterPro" id="IPR036001">
    <property type="entry name" value="PS_II_antenna-like_sf"/>
</dbReference>
<dbReference type="NCBIfam" id="TIGR03041">
    <property type="entry name" value="PS_antenn_a_b"/>
    <property type="match status" value="1"/>
</dbReference>
<dbReference type="Pfam" id="PF00421">
    <property type="entry name" value="PSII"/>
    <property type="match status" value="1"/>
</dbReference>
<dbReference type="SUPFAM" id="SSF161077">
    <property type="entry name" value="Photosystem II antenna protein-like"/>
    <property type="match status" value="1"/>
</dbReference>
<proteinExistence type="inferred from homology"/>
<gene>
    <name type="primary">pcbA</name>
    <name type="ordered locus">PMN2A_0066</name>
</gene>